<organism>
    <name type="scientific">Streptococcus equi subsp. zooepidemicus (strain MGCS10565)</name>
    <dbReference type="NCBI Taxonomy" id="552526"/>
    <lineage>
        <taxon>Bacteria</taxon>
        <taxon>Bacillati</taxon>
        <taxon>Bacillota</taxon>
        <taxon>Bacilli</taxon>
        <taxon>Lactobacillales</taxon>
        <taxon>Streptococcaceae</taxon>
        <taxon>Streptococcus</taxon>
    </lineage>
</organism>
<name>RS18_STREM</name>
<dbReference type="EMBL" id="CP001129">
    <property type="protein sequence ID" value="ACG61720.1"/>
    <property type="molecule type" value="Genomic_DNA"/>
</dbReference>
<dbReference type="RefSeq" id="WP_002983142.1">
    <property type="nucleotide sequence ID" value="NC_011134.1"/>
</dbReference>
<dbReference type="SMR" id="B4U153"/>
<dbReference type="GeneID" id="93826879"/>
<dbReference type="KEGG" id="sez:Sez_0344"/>
<dbReference type="HOGENOM" id="CLU_148710_2_2_9"/>
<dbReference type="Proteomes" id="UP000001873">
    <property type="component" value="Chromosome"/>
</dbReference>
<dbReference type="GO" id="GO:0022627">
    <property type="term" value="C:cytosolic small ribosomal subunit"/>
    <property type="evidence" value="ECO:0007669"/>
    <property type="project" value="TreeGrafter"/>
</dbReference>
<dbReference type="GO" id="GO:0070181">
    <property type="term" value="F:small ribosomal subunit rRNA binding"/>
    <property type="evidence" value="ECO:0007669"/>
    <property type="project" value="TreeGrafter"/>
</dbReference>
<dbReference type="GO" id="GO:0003735">
    <property type="term" value="F:structural constituent of ribosome"/>
    <property type="evidence" value="ECO:0007669"/>
    <property type="project" value="InterPro"/>
</dbReference>
<dbReference type="GO" id="GO:0006412">
    <property type="term" value="P:translation"/>
    <property type="evidence" value="ECO:0007669"/>
    <property type="project" value="UniProtKB-UniRule"/>
</dbReference>
<dbReference type="FunFam" id="4.10.640.10:FF:000003">
    <property type="entry name" value="30S ribosomal protein S18"/>
    <property type="match status" value="1"/>
</dbReference>
<dbReference type="Gene3D" id="4.10.640.10">
    <property type="entry name" value="Ribosomal protein S18"/>
    <property type="match status" value="1"/>
</dbReference>
<dbReference type="HAMAP" id="MF_00270">
    <property type="entry name" value="Ribosomal_bS18"/>
    <property type="match status" value="1"/>
</dbReference>
<dbReference type="InterPro" id="IPR001648">
    <property type="entry name" value="Ribosomal_bS18"/>
</dbReference>
<dbReference type="InterPro" id="IPR018275">
    <property type="entry name" value="Ribosomal_bS18_CS"/>
</dbReference>
<dbReference type="InterPro" id="IPR036870">
    <property type="entry name" value="Ribosomal_bS18_sf"/>
</dbReference>
<dbReference type="NCBIfam" id="TIGR00165">
    <property type="entry name" value="S18"/>
    <property type="match status" value="1"/>
</dbReference>
<dbReference type="PANTHER" id="PTHR13479">
    <property type="entry name" value="30S RIBOSOMAL PROTEIN S18"/>
    <property type="match status" value="1"/>
</dbReference>
<dbReference type="PANTHER" id="PTHR13479:SF40">
    <property type="entry name" value="SMALL RIBOSOMAL SUBUNIT PROTEIN BS18M"/>
    <property type="match status" value="1"/>
</dbReference>
<dbReference type="Pfam" id="PF01084">
    <property type="entry name" value="Ribosomal_S18"/>
    <property type="match status" value="1"/>
</dbReference>
<dbReference type="PRINTS" id="PR00974">
    <property type="entry name" value="RIBOSOMALS18"/>
</dbReference>
<dbReference type="SUPFAM" id="SSF46911">
    <property type="entry name" value="Ribosomal protein S18"/>
    <property type="match status" value="1"/>
</dbReference>
<dbReference type="PROSITE" id="PS00057">
    <property type="entry name" value="RIBOSOMAL_S18"/>
    <property type="match status" value="1"/>
</dbReference>
<feature type="chain" id="PRO_1000114453" description="Small ribosomal subunit protein bS18">
    <location>
        <begin position="1"/>
        <end position="79"/>
    </location>
</feature>
<reference key="1">
    <citation type="journal article" date="2008" name="PLoS ONE">
        <title>Genome sequence of a lancefield group C Streptococcus zooepidemicus strain causing epidemic nephritis: new information about an old disease.</title>
        <authorList>
            <person name="Beres S.B."/>
            <person name="Sesso R."/>
            <person name="Pinto S.W.L."/>
            <person name="Hoe N.P."/>
            <person name="Porcella S.F."/>
            <person name="Deleo F.R."/>
            <person name="Musser J.M."/>
        </authorList>
    </citation>
    <scope>NUCLEOTIDE SEQUENCE [LARGE SCALE GENOMIC DNA]</scope>
    <source>
        <strain>MGCS10565</strain>
    </source>
</reference>
<sequence length="79" mass="9204">MAQQRRGGFKRRKKVDFIAANKIEYVDYKDTELLSRFVSERGKILPRRVTGTSAKNQRKVTTAIKRARVMALMPYVNED</sequence>
<proteinExistence type="inferred from homology"/>
<keyword id="KW-0687">Ribonucleoprotein</keyword>
<keyword id="KW-0689">Ribosomal protein</keyword>
<keyword id="KW-0694">RNA-binding</keyword>
<keyword id="KW-0699">rRNA-binding</keyword>
<protein>
    <recommendedName>
        <fullName evidence="1">Small ribosomal subunit protein bS18</fullName>
    </recommendedName>
    <alternativeName>
        <fullName evidence="2">30S ribosomal protein S18</fullName>
    </alternativeName>
</protein>
<evidence type="ECO:0000255" key="1">
    <source>
        <dbReference type="HAMAP-Rule" id="MF_00270"/>
    </source>
</evidence>
<evidence type="ECO:0000305" key="2"/>
<accession>B4U153</accession>
<gene>
    <name evidence="1" type="primary">rpsR</name>
    <name type="ordered locus">Sez_0344</name>
</gene>
<comment type="function">
    <text evidence="1">Binds as a heterodimer with protein bS6 to the central domain of the 16S rRNA, where it helps stabilize the platform of the 30S subunit.</text>
</comment>
<comment type="subunit">
    <text evidence="1">Part of the 30S ribosomal subunit. Forms a tight heterodimer with protein bS6.</text>
</comment>
<comment type="similarity">
    <text evidence="1">Belongs to the bacterial ribosomal protein bS18 family.</text>
</comment>